<dbReference type="EC" id="6.1.1.4" evidence="1"/>
<dbReference type="EMBL" id="CP000267">
    <property type="protein sequence ID" value="ABD68508.1"/>
    <property type="molecule type" value="Genomic_DNA"/>
</dbReference>
<dbReference type="RefSeq" id="WP_011463081.1">
    <property type="nucleotide sequence ID" value="NC_007908.1"/>
</dbReference>
<dbReference type="SMR" id="Q220P5"/>
<dbReference type="STRING" id="338969.Rfer_0758"/>
<dbReference type="KEGG" id="rfr:Rfer_0758"/>
<dbReference type="eggNOG" id="COG0495">
    <property type="taxonomic scope" value="Bacteria"/>
</dbReference>
<dbReference type="HOGENOM" id="CLU_004427_0_0_4"/>
<dbReference type="OrthoDB" id="9810365at2"/>
<dbReference type="Proteomes" id="UP000008332">
    <property type="component" value="Chromosome"/>
</dbReference>
<dbReference type="GO" id="GO:0005829">
    <property type="term" value="C:cytosol"/>
    <property type="evidence" value="ECO:0007669"/>
    <property type="project" value="TreeGrafter"/>
</dbReference>
<dbReference type="GO" id="GO:0002161">
    <property type="term" value="F:aminoacyl-tRNA deacylase activity"/>
    <property type="evidence" value="ECO:0007669"/>
    <property type="project" value="InterPro"/>
</dbReference>
<dbReference type="GO" id="GO:0005524">
    <property type="term" value="F:ATP binding"/>
    <property type="evidence" value="ECO:0007669"/>
    <property type="project" value="UniProtKB-UniRule"/>
</dbReference>
<dbReference type="GO" id="GO:0004823">
    <property type="term" value="F:leucine-tRNA ligase activity"/>
    <property type="evidence" value="ECO:0007669"/>
    <property type="project" value="UniProtKB-UniRule"/>
</dbReference>
<dbReference type="GO" id="GO:0006429">
    <property type="term" value="P:leucyl-tRNA aminoacylation"/>
    <property type="evidence" value="ECO:0007669"/>
    <property type="project" value="UniProtKB-UniRule"/>
</dbReference>
<dbReference type="CDD" id="cd07958">
    <property type="entry name" value="Anticodon_Ia_Leu_BEm"/>
    <property type="match status" value="1"/>
</dbReference>
<dbReference type="CDD" id="cd00812">
    <property type="entry name" value="LeuRS_core"/>
    <property type="match status" value="1"/>
</dbReference>
<dbReference type="FunFam" id="1.10.730.10:FF:000003">
    <property type="entry name" value="Leucine--tRNA ligase"/>
    <property type="match status" value="1"/>
</dbReference>
<dbReference type="FunFam" id="3.40.50.620:FF:000003">
    <property type="entry name" value="Leucine--tRNA ligase"/>
    <property type="match status" value="1"/>
</dbReference>
<dbReference type="FunFam" id="3.40.50.620:FF:000056">
    <property type="entry name" value="Leucine--tRNA ligase"/>
    <property type="match status" value="1"/>
</dbReference>
<dbReference type="FunFam" id="3.90.740.10:FF:000012">
    <property type="entry name" value="Leucine--tRNA ligase"/>
    <property type="match status" value="1"/>
</dbReference>
<dbReference type="Gene3D" id="2.20.28.290">
    <property type="match status" value="1"/>
</dbReference>
<dbReference type="Gene3D" id="3.10.20.590">
    <property type="match status" value="1"/>
</dbReference>
<dbReference type="Gene3D" id="3.40.50.620">
    <property type="entry name" value="HUPs"/>
    <property type="match status" value="2"/>
</dbReference>
<dbReference type="Gene3D" id="1.10.730.10">
    <property type="entry name" value="Isoleucyl-tRNA Synthetase, Domain 1"/>
    <property type="match status" value="2"/>
</dbReference>
<dbReference type="HAMAP" id="MF_00049_B">
    <property type="entry name" value="Leu_tRNA_synth_B"/>
    <property type="match status" value="1"/>
</dbReference>
<dbReference type="InterPro" id="IPR001412">
    <property type="entry name" value="aa-tRNA-synth_I_CS"/>
</dbReference>
<dbReference type="InterPro" id="IPR002300">
    <property type="entry name" value="aa-tRNA-synth_Ia"/>
</dbReference>
<dbReference type="InterPro" id="IPR002302">
    <property type="entry name" value="Leu-tRNA-ligase"/>
</dbReference>
<dbReference type="InterPro" id="IPR025709">
    <property type="entry name" value="Leu_tRNA-synth_edit"/>
</dbReference>
<dbReference type="InterPro" id="IPR013155">
    <property type="entry name" value="M/V/L/I-tRNA-synth_anticd-bd"/>
</dbReference>
<dbReference type="InterPro" id="IPR015413">
    <property type="entry name" value="Methionyl/Leucyl_tRNA_Synth"/>
</dbReference>
<dbReference type="InterPro" id="IPR014729">
    <property type="entry name" value="Rossmann-like_a/b/a_fold"/>
</dbReference>
<dbReference type="InterPro" id="IPR009080">
    <property type="entry name" value="tRNAsynth_Ia_anticodon-bd"/>
</dbReference>
<dbReference type="InterPro" id="IPR009008">
    <property type="entry name" value="Val/Leu/Ile-tRNA-synth_edit"/>
</dbReference>
<dbReference type="NCBIfam" id="TIGR00396">
    <property type="entry name" value="leuS_bact"/>
    <property type="match status" value="1"/>
</dbReference>
<dbReference type="PANTHER" id="PTHR43740:SF2">
    <property type="entry name" value="LEUCINE--TRNA LIGASE, MITOCHONDRIAL"/>
    <property type="match status" value="1"/>
</dbReference>
<dbReference type="PANTHER" id="PTHR43740">
    <property type="entry name" value="LEUCYL-TRNA SYNTHETASE"/>
    <property type="match status" value="1"/>
</dbReference>
<dbReference type="Pfam" id="PF08264">
    <property type="entry name" value="Anticodon_1"/>
    <property type="match status" value="1"/>
</dbReference>
<dbReference type="Pfam" id="PF00133">
    <property type="entry name" value="tRNA-synt_1"/>
    <property type="match status" value="1"/>
</dbReference>
<dbReference type="Pfam" id="PF13603">
    <property type="entry name" value="tRNA-synt_1_2"/>
    <property type="match status" value="1"/>
</dbReference>
<dbReference type="Pfam" id="PF09334">
    <property type="entry name" value="tRNA-synt_1g"/>
    <property type="match status" value="1"/>
</dbReference>
<dbReference type="PRINTS" id="PR00985">
    <property type="entry name" value="TRNASYNTHLEU"/>
</dbReference>
<dbReference type="SUPFAM" id="SSF47323">
    <property type="entry name" value="Anticodon-binding domain of a subclass of class I aminoacyl-tRNA synthetases"/>
    <property type="match status" value="1"/>
</dbReference>
<dbReference type="SUPFAM" id="SSF52374">
    <property type="entry name" value="Nucleotidylyl transferase"/>
    <property type="match status" value="1"/>
</dbReference>
<dbReference type="SUPFAM" id="SSF50677">
    <property type="entry name" value="ValRS/IleRS/LeuRS editing domain"/>
    <property type="match status" value="1"/>
</dbReference>
<dbReference type="PROSITE" id="PS00178">
    <property type="entry name" value="AA_TRNA_LIGASE_I"/>
    <property type="match status" value="1"/>
</dbReference>
<name>SYL_ALBFT</name>
<reference key="1">
    <citation type="submission" date="2006-02" db="EMBL/GenBank/DDBJ databases">
        <title>Complete sequence of chromosome of Rhodoferax ferrireducens DSM 15236.</title>
        <authorList>
            <person name="Copeland A."/>
            <person name="Lucas S."/>
            <person name="Lapidus A."/>
            <person name="Barry K."/>
            <person name="Detter J.C."/>
            <person name="Glavina del Rio T."/>
            <person name="Hammon N."/>
            <person name="Israni S."/>
            <person name="Pitluck S."/>
            <person name="Brettin T."/>
            <person name="Bruce D."/>
            <person name="Han C."/>
            <person name="Tapia R."/>
            <person name="Gilna P."/>
            <person name="Kiss H."/>
            <person name="Schmutz J."/>
            <person name="Larimer F."/>
            <person name="Land M."/>
            <person name="Kyrpides N."/>
            <person name="Ivanova N."/>
            <person name="Richardson P."/>
        </authorList>
    </citation>
    <scope>NUCLEOTIDE SEQUENCE [LARGE SCALE GENOMIC DNA]</scope>
    <source>
        <strain>ATCC BAA-621 / DSM 15236 / T118</strain>
    </source>
</reference>
<comment type="catalytic activity">
    <reaction evidence="1">
        <text>tRNA(Leu) + L-leucine + ATP = L-leucyl-tRNA(Leu) + AMP + diphosphate</text>
        <dbReference type="Rhea" id="RHEA:11688"/>
        <dbReference type="Rhea" id="RHEA-COMP:9613"/>
        <dbReference type="Rhea" id="RHEA-COMP:9622"/>
        <dbReference type="ChEBI" id="CHEBI:30616"/>
        <dbReference type="ChEBI" id="CHEBI:33019"/>
        <dbReference type="ChEBI" id="CHEBI:57427"/>
        <dbReference type="ChEBI" id="CHEBI:78442"/>
        <dbReference type="ChEBI" id="CHEBI:78494"/>
        <dbReference type="ChEBI" id="CHEBI:456215"/>
        <dbReference type="EC" id="6.1.1.4"/>
    </reaction>
</comment>
<comment type="subcellular location">
    <subcellularLocation>
        <location evidence="1">Cytoplasm</location>
    </subcellularLocation>
</comment>
<comment type="similarity">
    <text evidence="1">Belongs to the class-I aminoacyl-tRNA synthetase family.</text>
</comment>
<organism>
    <name type="scientific">Albidiferax ferrireducens (strain ATCC BAA-621 / DSM 15236 / T118)</name>
    <name type="common">Rhodoferax ferrireducens</name>
    <dbReference type="NCBI Taxonomy" id="338969"/>
    <lineage>
        <taxon>Bacteria</taxon>
        <taxon>Pseudomonadati</taxon>
        <taxon>Pseudomonadota</taxon>
        <taxon>Betaproteobacteria</taxon>
        <taxon>Burkholderiales</taxon>
        <taxon>Comamonadaceae</taxon>
        <taxon>Rhodoferax</taxon>
    </lineage>
</organism>
<feature type="chain" id="PRO_1000009408" description="Leucine--tRNA ligase">
    <location>
        <begin position="1"/>
        <end position="892"/>
    </location>
</feature>
<feature type="short sequence motif" description="'HIGH' region">
    <location>
        <begin position="42"/>
        <end position="52"/>
    </location>
</feature>
<feature type="short sequence motif" description="'KMSKS' region">
    <location>
        <begin position="640"/>
        <end position="644"/>
    </location>
</feature>
<feature type="binding site" evidence="1">
    <location>
        <position position="643"/>
    </location>
    <ligand>
        <name>ATP</name>
        <dbReference type="ChEBI" id="CHEBI:30616"/>
    </ligand>
</feature>
<protein>
    <recommendedName>
        <fullName evidence="1">Leucine--tRNA ligase</fullName>
        <ecNumber evidence="1">6.1.1.4</ecNumber>
    </recommendedName>
    <alternativeName>
        <fullName evidence="1">Leucyl-tRNA synthetase</fullName>
        <shortName evidence="1">LeuRS</shortName>
    </alternativeName>
</protein>
<proteinExistence type="inferred from homology"/>
<keyword id="KW-0030">Aminoacyl-tRNA synthetase</keyword>
<keyword id="KW-0067">ATP-binding</keyword>
<keyword id="KW-0963">Cytoplasm</keyword>
<keyword id="KW-0436">Ligase</keyword>
<keyword id="KW-0547">Nucleotide-binding</keyword>
<keyword id="KW-0648">Protein biosynthesis</keyword>
<keyword id="KW-1185">Reference proteome</keyword>
<evidence type="ECO:0000255" key="1">
    <source>
        <dbReference type="HAMAP-Rule" id="MF_00049"/>
    </source>
</evidence>
<gene>
    <name evidence="1" type="primary">leuS</name>
    <name type="ordered locus">Rfer_0758</name>
</gene>
<sequence length="892" mass="99291">MQEKYTPLDVEQAAQSHWTAMDAYRVTEDSSKKKFYACSMLPYPSGKLHMGHVRNYTINDMLTRYLRMNGYNVLMPMGWDAFGLPAENAALKNGVPPAQWTFENIAYMKQQMQAMGLAIDWSREVATCDPSYYKWNQWLFLKMLDKGIAYRKTQVVNWDPVDQTVLANEQVIDGKGWRTGATVEKREIPGYYLKITDYAEELLGQVQTGLPGWPERVKLMQENWIGKSEGVRFAFTHDIRDASGALIDDGRMYVFTTRPDTIKGVTFCAVAPEHPLALHAARGNPALAAFIEECKTGGTTEAELATQEKKGLDTGLIVTHPLTQLPVAVWVGNYVLMSYGDGAVMGVPAHDERDFAFAKKYGLPIKQVVQVDGEQFDYDQWQDWYADKQRGVAINSGSFSGMSFKQAVEAVAHKLAALGLGEKKTTWRLRDWGVSRQRYWGTPIPIIHCPEHGAVPVPEKDLPVVLPQDCVPDGSGNPLHKHEGFHAGVVCPICGVAARRETDTMDTFVDSSWYFMRYCDPKNEKAMVGEGAAYWMPMDQYIGGIEHAILHLLYARFWTKVMRDLGLVKVDEPFTKLLTQGMVLNHIYSRKGENGAKDYFWPNDVENVSDETGKVVAAKLKVAVGNLPAGTLVDYEGIGTMSKSKNNGVDPQDLIERYGADTARLYTMFTAPPEATLEWNDAAVEGSYRFLRRVWNFGIKLSTIDMIAVDESTTGATALNDINFSKEAKVLRLEIHTVLKQVDYDYQRMQYNTVVSGAMKMINALENFKATDSGGAQVALIEGFGILLRCLYPATPHIAHSLWQGLGYAGTLGDLLDAPWPQVDELALLQDEVELMLQINGKLRGAIVVSAGASKVEIELAAIDSEVFRKLANGATPKKVIVVPGRLVNLVV</sequence>
<accession>Q220P5</accession>